<proteinExistence type="inferred from homology"/>
<evidence type="ECO:0000255" key="1">
    <source>
        <dbReference type="HAMAP-Rule" id="MF_00921"/>
    </source>
</evidence>
<gene>
    <name type="ordered locus">SERP2169</name>
</gene>
<organism>
    <name type="scientific">Staphylococcus epidermidis (strain ATCC 35984 / DSM 28319 / BCRC 17069 / CCUG 31568 / BM 3577 / RP62A)</name>
    <dbReference type="NCBI Taxonomy" id="176279"/>
    <lineage>
        <taxon>Bacteria</taxon>
        <taxon>Bacillati</taxon>
        <taxon>Bacillota</taxon>
        <taxon>Bacilli</taxon>
        <taxon>Bacillales</taxon>
        <taxon>Staphylococcaceae</taxon>
        <taxon>Staphylococcus</taxon>
    </lineage>
</organism>
<sequence length="272" mass="31037">MKDNNEVLKLFIVSDSIGETAQRMIHATLTQFPDLTQVEIKKFPYIKDEQEFLNVLQLAKEQNAIVATTLVSESFNALGHQFANEHQIPYVDYMSELISIIKQHTHAKPLMESGALRKLNDEYFKRIEAIEYSVKYDDGKHFTDIGEADALIVGVSRTSKTPLSMYLANKGYKIANIPLVPEVAIPDNVFQQKNLKVFGLTASPNYIANIRRNRAETLGLSSESNYNSLERIKKELSYAEEVFRKLNATVINTEYKSIEESAFYIEKFLAKR</sequence>
<accession>Q5HL18</accession>
<protein>
    <recommendedName>
        <fullName evidence="1">Putative pyruvate, phosphate dikinase regulatory protein 2</fullName>
        <shortName evidence="1">PPDK regulatory protein 2</shortName>
        <ecNumber evidence="1">2.7.11.32</ecNumber>
        <ecNumber evidence="1">2.7.4.27</ecNumber>
    </recommendedName>
</protein>
<reference key="1">
    <citation type="journal article" date="2005" name="J. Bacteriol.">
        <title>Insights on evolution of virulence and resistance from the complete genome analysis of an early methicillin-resistant Staphylococcus aureus strain and a biofilm-producing methicillin-resistant Staphylococcus epidermidis strain.</title>
        <authorList>
            <person name="Gill S.R."/>
            <person name="Fouts D.E."/>
            <person name="Archer G.L."/>
            <person name="Mongodin E.F."/>
            <person name="DeBoy R.T."/>
            <person name="Ravel J."/>
            <person name="Paulsen I.T."/>
            <person name="Kolonay J.F."/>
            <person name="Brinkac L.M."/>
            <person name="Beanan M.J."/>
            <person name="Dodson R.J."/>
            <person name="Daugherty S.C."/>
            <person name="Madupu R."/>
            <person name="Angiuoli S.V."/>
            <person name="Durkin A.S."/>
            <person name="Haft D.H."/>
            <person name="Vamathevan J.J."/>
            <person name="Khouri H."/>
            <person name="Utterback T.R."/>
            <person name="Lee C."/>
            <person name="Dimitrov G."/>
            <person name="Jiang L."/>
            <person name="Qin H."/>
            <person name="Weidman J."/>
            <person name="Tran K."/>
            <person name="Kang K.H."/>
            <person name="Hance I.R."/>
            <person name="Nelson K.E."/>
            <person name="Fraser C.M."/>
        </authorList>
    </citation>
    <scope>NUCLEOTIDE SEQUENCE [LARGE SCALE GENOMIC DNA]</scope>
    <source>
        <strain>ATCC 35984 / DSM 28319 / BCRC 17069 / CCUG 31568 / BM 3577 / RP62A</strain>
    </source>
</reference>
<comment type="function">
    <text evidence="1">Bifunctional serine/threonine kinase and phosphorylase involved in the regulation of the pyruvate, phosphate dikinase (PPDK) by catalyzing its phosphorylation/dephosphorylation.</text>
</comment>
<comment type="catalytic activity">
    <reaction evidence="1">
        <text>N(tele)-phospho-L-histidyl/L-threonyl-[pyruvate, phosphate dikinase] + ADP = N(tele)-phospho-L-histidyl/O-phospho-L-threonyl-[pyruvate, phosphate dikinase] + AMP + H(+)</text>
        <dbReference type="Rhea" id="RHEA:43692"/>
        <dbReference type="Rhea" id="RHEA-COMP:10650"/>
        <dbReference type="Rhea" id="RHEA-COMP:10651"/>
        <dbReference type="ChEBI" id="CHEBI:15378"/>
        <dbReference type="ChEBI" id="CHEBI:30013"/>
        <dbReference type="ChEBI" id="CHEBI:61977"/>
        <dbReference type="ChEBI" id="CHEBI:83586"/>
        <dbReference type="ChEBI" id="CHEBI:456215"/>
        <dbReference type="ChEBI" id="CHEBI:456216"/>
        <dbReference type="EC" id="2.7.11.32"/>
    </reaction>
</comment>
<comment type="catalytic activity">
    <reaction evidence="1">
        <text>N(tele)-phospho-L-histidyl/O-phospho-L-threonyl-[pyruvate, phosphate dikinase] + phosphate + H(+) = N(tele)-phospho-L-histidyl/L-threonyl-[pyruvate, phosphate dikinase] + diphosphate</text>
        <dbReference type="Rhea" id="RHEA:43696"/>
        <dbReference type="Rhea" id="RHEA-COMP:10650"/>
        <dbReference type="Rhea" id="RHEA-COMP:10651"/>
        <dbReference type="ChEBI" id="CHEBI:15378"/>
        <dbReference type="ChEBI" id="CHEBI:30013"/>
        <dbReference type="ChEBI" id="CHEBI:33019"/>
        <dbReference type="ChEBI" id="CHEBI:43474"/>
        <dbReference type="ChEBI" id="CHEBI:61977"/>
        <dbReference type="ChEBI" id="CHEBI:83586"/>
        <dbReference type="EC" id="2.7.4.27"/>
    </reaction>
</comment>
<comment type="similarity">
    <text evidence="1">Belongs to the pyruvate, phosphate/water dikinase regulatory protein family. PDRP subfamily.</text>
</comment>
<name>PDRP2_STAEQ</name>
<keyword id="KW-0418">Kinase</keyword>
<keyword id="KW-0547">Nucleotide-binding</keyword>
<keyword id="KW-1185">Reference proteome</keyword>
<keyword id="KW-0723">Serine/threonine-protein kinase</keyword>
<keyword id="KW-0808">Transferase</keyword>
<dbReference type="EC" id="2.7.11.32" evidence="1"/>
<dbReference type="EC" id="2.7.4.27" evidence="1"/>
<dbReference type="EMBL" id="CP000029">
    <property type="protein sequence ID" value="AAW52962.1"/>
    <property type="molecule type" value="Genomic_DNA"/>
</dbReference>
<dbReference type="RefSeq" id="WP_001830630.1">
    <property type="nucleotide sequence ID" value="NC_002976.3"/>
</dbReference>
<dbReference type="SMR" id="Q5HL18"/>
<dbReference type="STRING" id="176279.SERP2169"/>
<dbReference type="KEGG" id="ser:SERP2169"/>
<dbReference type="eggNOG" id="COG1806">
    <property type="taxonomic scope" value="Bacteria"/>
</dbReference>
<dbReference type="HOGENOM" id="CLU_046206_2_1_9"/>
<dbReference type="Proteomes" id="UP000000531">
    <property type="component" value="Chromosome"/>
</dbReference>
<dbReference type="GO" id="GO:0043531">
    <property type="term" value="F:ADP binding"/>
    <property type="evidence" value="ECO:0007669"/>
    <property type="project" value="UniProtKB-UniRule"/>
</dbReference>
<dbReference type="GO" id="GO:0005524">
    <property type="term" value="F:ATP binding"/>
    <property type="evidence" value="ECO:0007669"/>
    <property type="project" value="InterPro"/>
</dbReference>
<dbReference type="GO" id="GO:0016776">
    <property type="term" value="F:phosphotransferase activity, phosphate group as acceptor"/>
    <property type="evidence" value="ECO:0007669"/>
    <property type="project" value="UniProtKB-UniRule"/>
</dbReference>
<dbReference type="GO" id="GO:0004674">
    <property type="term" value="F:protein serine/threonine kinase activity"/>
    <property type="evidence" value="ECO:0007669"/>
    <property type="project" value="UniProtKB-UniRule"/>
</dbReference>
<dbReference type="HAMAP" id="MF_00921">
    <property type="entry name" value="PDRP"/>
    <property type="match status" value="1"/>
</dbReference>
<dbReference type="InterPro" id="IPR005177">
    <property type="entry name" value="Kinase-pyrophosphorylase"/>
</dbReference>
<dbReference type="InterPro" id="IPR026565">
    <property type="entry name" value="PPDK_reg"/>
</dbReference>
<dbReference type="NCBIfam" id="NF003742">
    <property type="entry name" value="PRK05339.1"/>
    <property type="match status" value="1"/>
</dbReference>
<dbReference type="PANTHER" id="PTHR31756">
    <property type="entry name" value="PYRUVATE, PHOSPHATE DIKINASE REGULATORY PROTEIN 1, CHLOROPLASTIC"/>
    <property type="match status" value="1"/>
</dbReference>
<dbReference type="PANTHER" id="PTHR31756:SF3">
    <property type="entry name" value="PYRUVATE, PHOSPHATE DIKINASE REGULATORY PROTEIN 1, CHLOROPLASTIC"/>
    <property type="match status" value="1"/>
</dbReference>
<dbReference type="Pfam" id="PF03618">
    <property type="entry name" value="Kinase-PPPase"/>
    <property type="match status" value="1"/>
</dbReference>
<feature type="chain" id="PRO_0000196724" description="Putative pyruvate, phosphate dikinase regulatory protein 2">
    <location>
        <begin position="1"/>
        <end position="272"/>
    </location>
</feature>
<feature type="binding site" evidence="1">
    <location>
        <begin position="154"/>
        <end position="161"/>
    </location>
    <ligand>
        <name>ADP</name>
        <dbReference type="ChEBI" id="CHEBI:456216"/>
    </ligand>
</feature>